<reference key="1">
    <citation type="journal article" date="2006" name="Genome Biol.">
        <title>Genomic analysis reveals that Pseudomonas aeruginosa virulence is combinatorial.</title>
        <authorList>
            <person name="Lee D.G."/>
            <person name="Urbach J.M."/>
            <person name="Wu G."/>
            <person name="Liberati N.T."/>
            <person name="Feinbaum R.L."/>
            <person name="Miyata S."/>
            <person name="Diggins L.T."/>
            <person name="He J."/>
            <person name="Saucier M."/>
            <person name="Deziel E."/>
            <person name="Friedman L."/>
            <person name="Li L."/>
            <person name="Grills G."/>
            <person name="Montgomery K."/>
            <person name="Kucherlapati R."/>
            <person name="Rahme L.G."/>
            <person name="Ausubel F.M."/>
        </authorList>
    </citation>
    <scope>NUCLEOTIDE SEQUENCE [LARGE SCALE GENOMIC DNA]</scope>
    <source>
        <strain>UCBPP-PA14</strain>
    </source>
</reference>
<organism>
    <name type="scientific">Pseudomonas aeruginosa (strain UCBPP-PA14)</name>
    <dbReference type="NCBI Taxonomy" id="208963"/>
    <lineage>
        <taxon>Bacteria</taxon>
        <taxon>Pseudomonadati</taxon>
        <taxon>Pseudomonadota</taxon>
        <taxon>Gammaproteobacteria</taxon>
        <taxon>Pseudomonadales</taxon>
        <taxon>Pseudomonadaceae</taxon>
        <taxon>Pseudomonas</taxon>
    </lineage>
</organism>
<feature type="chain" id="PRO_0000296855" description="DNA-directed RNA polymerase subunit alpha">
    <location>
        <begin position="1"/>
        <end position="333"/>
    </location>
</feature>
<feature type="region of interest" description="Alpha N-terminal domain (alpha-NTD)" evidence="1">
    <location>
        <begin position="1"/>
        <end position="234"/>
    </location>
</feature>
<feature type="region of interest" description="Alpha C-terminal domain (alpha-CTD)" evidence="1">
    <location>
        <begin position="248"/>
        <end position="333"/>
    </location>
</feature>
<name>RPOA_PSEAB</name>
<dbReference type="EC" id="2.7.7.6" evidence="1"/>
<dbReference type="EMBL" id="CP000438">
    <property type="protein sequence ID" value="ABJ15630.1"/>
    <property type="molecule type" value="Genomic_DNA"/>
</dbReference>
<dbReference type="RefSeq" id="WP_003093675.1">
    <property type="nucleotide sequence ID" value="NZ_CP034244.1"/>
</dbReference>
<dbReference type="SMR" id="Q02T55"/>
<dbReference type="KEGG" id="pau:PA14_09115"/>
<dbReference type="PseudoCAP" id="PA14_09115"/>
<dbReference type="HOGENOM" id="CLU_053084_0_0_6"/>
<dbReference type="BioCyc" id="PAER208963:G1G74-761-MONOMER"/>
<dbReference type="Proteomes" id="UP000000653">
    <property type="component" value="Chromosome"/>
</dbReference>
<dbReference type="GO" id="GO:0005737">
    <property type="term" value="C:cytoplasm"/>
    <property type="evidence" value="ECO:0007669"/>
    <property type="project" value="UniProtKB-ARBA"/>
</dbReference>
<dbReference type="GO" id="GO:0000428">
    <property type="term" value="C:DNA-directed RNA polymerase complex"/>
    <property type="evidence" value="ECO:0007669"/>
    <property type="project" value="UniProtKB-KW"/>
</dbReference>
<dbReference type="GO" id="GO:0003677">
    <property type="term" value="F:DNA binding"/>
    <property type="evidence" value="ECO:0007669"/>
    <property type="project" value="UniProtKB-UniRule"/>
</dbReference>
<dbReference type="GO" id="GO:0003899">
    <property type="term" value="F:DNA-directed RNA polymerase activity"/>
    <property type="evidence" value="ECO:0007669"/>
    <property type="project" value="UniProtKB-UniRule"/>
</dbReference>
<dbReference type="GO" id="GO:0046983">
    <property type="term" value="F:protein dimerization activity"/>
    <property type="evidence" value="ECO:0007669"/>
    <property type="project" value="InterPro"/>
</dbReference>
<dbReference type="GO" id="GO:0006351">
    <property type="term" value="P:DNA-templated transcription"/>
    <property type="evidence" value="ECO:0007669"/>
    <property type="project" value="UniProtKB-UniRule"/>
</dbReference>
<dbReference type="CDD" id="cd06928">
    <property type="entry name" value="RNAP_alpha_NTD"/>
    <property type="match status" value="1"/>
</dbReference>
<dbReference type="FunFam" id="1.10.150.20:FF:000001">
    <property type="entry name" value="DNA-directed RNA polymerase subunit alpha"/>
    <property type="match status" value="1"/>
</dbReference>
<dbReference type="FunFam" id="2.170.120.12:FF:000001">
    <property type="entry name" value="DNA-directed RNA polymerase subunit alpha"/>
    <property type="match status" value="1"/>
</dbReference>
<dbReference type="Gene3D" id="1.10.150.20">
    <property type="entry name" value="5' to 3' exonuclease, C-terminal subdomain"/>
    <property type="match status" value="1"/>
</dbReference>
<dbReference type="Gene3D" id="2.170.120.12">
    <property type="entry name" value="DNA-directed RNA polymerase, insert domain"/>
    <property type="match status" value="1"/>
</dbReference>
<dbReference type="Gene3D" id="3.30.1360.10">
    <property type="entry name" value="RNA polymerase, RBP11-like subunit"/>
    <property type="match status" value="1"/>
</dbReference>
<dbReference type="HAMAP" id="MF_00059">
    <property type="entry name" value="RNApol_bact_RpoA"/>
    <property type="match status" value="1"/>
</dbReference>
<dbReference type="InterPro" id="IPR011262">
    <property type="entry name" value="DNA-dir_RNA_pol_insert"/>
</dbReference>
<dbReference type="InterPro" id="IPR011263">
    <property type="entry name" value="DNA-dir_RNA_pol_RpoA/D/Rpb3"/>
</dbReference>
<dbReference type="InterPro" id="IPR011773">
    <property type="entry name" value="DNA-dir_RpoA"/>
</dbReference>
<dbReference type="InterPro" id="IPR036603">
    <property type="entry name" value="RBP11-like"/>
</dbReference>
<dbReference type="InterPro" id="IPR011260">
    <property type="entry name" value="RNAP_asu_C"/>
</dbReference>
<dbReference type="InterPro" id="IPR036643">
    <property type="entry name" value="RNApol_insert_sf"/>
</dbReference>
<dbReference type="NCBIfam" id="NF003513">
    <property type="entry name" value="PRK05182.1-2"/>
    <property type="match status" value="1"/>
</dbReference>
<dbReference type="NCBIfam" id="NF003519">
    <property type="entry name" value="PRK05182.2-5"/>
    <property type="match status" value="1"/>
</dbReference>
<dbReference type="NCBIfam" id="TIGR02027">
    <property type="entry name" value="rpoA"/>
    <property type="match status" value="1"/>
</dbReference>
<dbReference type="Pfam" id="PF01000">
    <property type="entry name" value="RNA_pol_A_bac"/>
    <property type="match status" value="1"/>
</dbReference>
<dbReference type="Pfam" id="PF03118">
    <property type="entry name" value="RNA_pol_A_CTD"/>
    <property type="match status" value="1"/>
</dbReference>
<dbReference type="Pfam" id="PF01193">
    <property type="entry name" value="RNA_pol_L"/>
    <property type="match status" value="1"/>
</dbReference>
<dbReference type="SMART" id="SM00662">
    <property type="entry name" value="RPOLD"/>
    <property type="match status" value="1"/>
</dbReference>
<dbReference type="SUPFAM" id="SSF47789">
    <property type="entry name" value="C-terminal domain of RNA polymerase alpha subunit"/>
    <property type="match status" value="1"/>
</dbReference>
<dbReference type="SUPFAM" id="SSF56553">
    <property type="entry name" value="Insert subdomain of RNA polymerase alpha subunit"/>
    <property type="match status" value="1"/>
</dbReference>
<dbReference type="SUPFAM" id="SSF55257">
    <property type="entry name" value="RBP11-like subunits of RNA polymerase"/>
    <property type="match status" value="1"/>
</dbReference>
<comment type="function">
    <text evidence="1">DNA-dependent RNA polymerase catalyzes the transcription of DNA into RNA using the four ribonucleoside triphosphates as substrates.</text>
</comment>
<comment type="catalytic activity">
    <reaction evidence="1">
        <text>RNA(n) + a ribonucleoside 5'-triphosphate = RNA(n+1) + diphosphate</text>
        <dbReference type="Rhea" id="RHEA:21248"/>
        <dbReference type="Rhea" id="RHEA-COMP:14527"/>
        <dbReference type="Rhea" id="RHEA-COMP:17342"/>
        <dbReference type="ChEBI" id="CHEBI:33019"/>
        <dbReference type="ChEBI" id="CHEBI:61557"/>
        <dbReference type="ChEBI" id="CHEBI:140395"/>
        <dbReference type="EC" id="2.7.7.6"/>
    </reaction>
</comment>
<comment type="subunit">
    <text evidence="1">Homodimer. The RNAP catalytic core consists of 2 alpha, 1 beta, 1 beta' and 1 omega subunit. When a sigma factor is associated with the core the holoenzyme is formed, which can initiate transcription.</text>
</comment>
<comment type="domain">
    <text evidence="1">The N-terminal domain is essential for RNAP assembly and basal transcription, whereas the C-terminal domain is involved in interaction with transcriptional regulators and with upstream promoter elements.</text>
</comment>
<comment type="similarity">
    <text evidence="1">Belongs to the RNA polymerase alpha chain family.</text>
</comment>
<proteinExistence type="inferred from homology"/>
<protein>
    <recommendedName>
        <fullName evidence="1">DNA-directed RNA polymerase subunit alpha</fullName>
        <shortName evidence="1">RNAP subunit alpha</shortName>
        <ecNumber evidence="1">2.7.7.6</ecNumber>
    </recommendedName>
    <alternativeName>
        <fullName evidence="1">RNA polymerase subunit alpha</fullName>
    </alternativeName>
    <alternativeName>
        <fullName evidence="1">Transcriptase subunit alpha</fullName>
    </alternativeName>
</protein>
<keyword id="KW-0240">DNA-directed RNA polymerase</keyword>
<keyword id="KW-0548">Nucleotidyltransferase</keyword>
<keyword id="KW-0804">Transcription</keyword>
<keyword id="KW-0808">Transferase</keyword>
<gene>
    <name evidence="1" type="primary">rpoA</name>
    <name type="ordered locus">PA14_09115</name>
</gene>
<evidence type="ECO:0000255" key="1">
    <source>
        <dbReference type="HAMAP-Rule" id="MF_00059"/>
    </source>
</evidence>
<sequence length="333" mass="36650">MQSSVNEFLTPRHIDVQVVSQTRAKITLEPLERGFGHTLGNALRRILLSSMPGCAVVEAEIDGVLHEYSAIEGVQEDVIEILLNLKGLAIKLHGRDEVTLTLAKKGSGVVTAADIQLDHDVEIINGDHVIANLADNGALNMKLKVARGRGYEPADARQSDEDESRSIGRLQLDASFSPVRRVSYVVENARVEQRTNLDKLVLDLETNGTLDPEEAIRRAATILQQQLAAFVDLKGDSEPVVEEQEDEIDPILLRPVDDLELTVRSANCLKAENIYYIGDLIQRTEVELLKTPNLGKKSLTEIKDVLASRGLSLGMRLDNWPPASLKKDDKATA</sequence>
<accession>Q02T55</accession>